<sequence>MCGIVGYIGQLDAKEILLKGLEKLEYRGYDSAGIAVANEDGVHVFKEKGRIADLRAAVDANVKSQAGIGHTRWATHGEPSRLNAHPHQSASGRFTLVHNGVIENYVQLTREYLHDVTLKSDTDTEVVVQVIEQFVNNGLDTEEAFRQTLMLLKGSYAIALFDHENKETIYVAKNKSPLLVGLGDNFNVVASDAMAMLQVTNEYVELMDKEMVIVTDKKVVIKNLDGELMSRASYIAELDASDIEKGTYPHYMLKEIDEQPLVMRKIIQTYQDENGKLSIPGDISNAVAEADRVYIIACGTSYHAGLVGKQFIETWAKVPAEVHVASEFSYNMPLLSEKPLFIFISQSGETADSRAVLVQVKKLGHKALTLTNVPGSTLSREADYTLLLNAGPEIAVASTKAYTAQIAVLAILAAVTAESRGKELGFDLVKELGIIGNAMEALCDQKDEMEMIAREYLTVTRNAFFIGRGLDYFVCLEGSLKLKEISYIQAEGFAGGELKHGTIALIEDGTPVIALATQEHVNLSIRGNVKEVTARGANPCVISLKGLEEADDRFVLPEVHPELAPLVSVIPLQLIAYYAALHRGCDVDKPRNLAKSVTVE</sequence>
<keyword id="KW-0032">Aminotransferase</keyword>
<keyword id="KW-0963">Cytoplasm</keyword>
<keyword id="KW-0315">Glutamine amidotransferase</keyword>
<keyword id="KW-1185">Reference proteome</keyword>
<keyword id="KW-0677">Repeat</keyword>
<keyword id="KW-0808">Transferase</keyword>
<evidence type="ECO:0000255" key="1">
    <source>
        <dbReference type="HAMAP-Rule" id="MF_00164"/>
    </source>
</evidence>
<dbReference type="EC" id="2.6.1.16" evidence="1"/>
<dbReference type="EMBL" id="AE017333">
    <property type="protein sequence ID" value="AAU39168.1"/>
    <property type="molecule type" value="Genomic_DNA"/>
</dbReference>
<dbReference type="EMBL" id="CP000002">
    <property type="protein sequence ID" value="AAU21823.1"/>
    <property type="molecule type" value="Genomic_DNA"/>
</dbReference>
<dbReference type="RefSeq" id="WP_003178449.1">
    <property type="nucleotide sequence ID" value="NC_006322.1"/>
</dbReference>
<dbReference type="SMR" id="Q65P46"/>
<dbReference type="STRING" id="279010.BL02704"/>
<dbReference type="GeneID" id="92858832"/>
<dbReference type="KEGG" id="bld:BLi00204"/>
<dbReference type="KEGG" id="bli:BL02704"/>
<dbReference type="PATRIC" id="fig|279010.13.peg.184"/>
<dbReference type="eggNOG" id="COG0449">
    <property type="taxonomic scope" value="Bacteria"/>
</dbReference>
<dbReference type="HOGENOM" id="CLU_012520_7_1_9"/>
<dbReference type="Proteomes" id="UP000000606">
    <property type="component" value="Chromosome"/>
</dbReference>
<dbReference type="Bgee" id="BL02704">
    <property type="expression patterns" value="Expressed in pharyngeal slit and 1 other cell type or tissue"/>
</dbReference>
<dbReference type="GO" id="GO:0005829">
    <property type="term" value="C:cytosol"/>
    <property type="evidence" value="ECO:0007669"/>
    <property type="project" value="TreeGrafter"/>
</dbReference>
<dbReference type="GO" id="GO:0097367">
    <property type="term" value="F:carbohydrate derivative binding"/>
    <property type="evidence" value="ECO:0007669"/>
    <property type="project" value="InterPro"/>
</dbReference>
<dbReference type="GO" id="GO:0004360">
    <property type="term" value="F:glutamine-fructose-6-phosphate transaminase (isomerizing) activity"/>
    <property type="evidence" value="ECO:0007669"/>
    <property type="project" value="UniProtKB-UniRule"/>
</dbReference>
<dbReference type="GO" id="GO:0005975">
    <property type="term" value="P:carbohydrate metabolic process"/>
    <property type="evidence" value="ECO:0007669"/>
    <property type="project" value="UniProtKB-UniRule"/>
</dbReference>
<dbReference type="GO" id="GO:0006002">
    <property type="term" value="P:fructose 6-phosphate metabolic process"/>
    <property type="evidence" value="ECO:0007669"/>
    <property type="project" value="TreeGrafter"/>
</dbReference>
<dbReference type="GO" id="GO:0006487">
    <property type="term" value="P:protein N-linked glycosylation"/>
    <property type="evidence" value="ECO:0007669"/>
    <property type="project" value="TreeGrafter"/>
</dbReference>
<dbReference type="GO" id="GO:0006047">
    <property type="term" value="P:UDP-N-acetylglucosamine metabolic process"/>
    <property type="evidence" value="ECO:0007669"/>
    <property type="project" value="TreeGrafter"/>
</dbReference>
<dbReference type="CDD" id="cd00714">
    <property type="entry name" value="GFAT"/>
    <property type="match status" value="1"/>
</dbReference>
<dbReference type="CDD" id="cd05008">
    <property type="entry name" value="SIS_GlmS_GlmD_1"/>
    <property type="match status" value="1"/>
</dbReference>
<dbReference type="CDD" id="cd05009">
    <property type="entry name" value="SIS_GlmS_GlmD_2"/>
    <property type="match status" value="1"/>
</dbReference>
<dbReference type="FunFam" id="3.40.50.10490:FF:000022">
    <property type="entry name" value="Glutamine--fructose-6-phosphate aminotransferase [isomerizing]"/>
    <property type="match status" value="1"/>
</dbReference>
<dbReference type="FunFam" id="3.60.20.10:FF:000006">
    <property type="entry name" value="Glutamine--fructose-6-phosphate aminotransferase [isomerizing]"/>
    <property type="match status" value="1"/>
</dbReference>
<dbReference type="Gene3D" id="3.40.50.10490">
    <property type="entry name" value="Glucose-6-phosphate isomerase like protein, domain 1"/>
    <property type="match status" value="2"/>
</dbReference>
<dbReference type="Gene3D" id="3.60.20.10">
    <property type="entry name" value="Glutamine Phosphoribosylpyrophosphate, subunit 1, domain 1"/>
    <property type="match status" value="1"/>
</dbReference>
<dbReference type="HAMAP" id="MF_00164">
    <property type="entry name" value="GlmS"/>
    <property type="match status" value="1"/>
</dbReference>
<dbReference type="InterPro" id="IPR017932">
    <property type="entry name" value="GATase_2_dom"/>
</dbReference>
<dbReference type="InterPro" id="IPR005855">
    <property type="entry name" value="GFAT"/>
</dbReference>
<dbReference type="InterPro" id="IPR047084">
    <property type="entry name" value="GFAT_N"/>
</dbReference>
<dbReference type="InterPro" id="IPR035466">
    <property type="entry name" value="GlmS/AgaS_SIS"/>
</dbReference>
<dbReference type="InterPro" id="IPR035490">
    <property type="entry name" value="GlmS/FrlB_SIS"/>
</dbReference>
<dbReference type="InterPro" id="IPR029055">
    <property type="entry name" value="Ntn_hydrolases_N"/>
</dbReference>
<dbReference type="InterPro" id="IPR001347">
    <property type="entry name" value="SIS_dom"/>
</dbReference>
<dbReference type="InterPro" id="IPR046348">
    <property type="entry name" value="SIS_dom_sf"/>
</dbReference>
<dbReference type="NCBIfam" id="TIGR01135">
    <property type="entry name" value="glmS"/>
    <property type="match status" value="1"/>
</dbReference>
<dbReference type="NCBIfam" id="NF001484">
    <property type="entry name" value="PRK00331.1"/>
    <property type="match status" value="1"/>
</dbReference>
<dbReference type="PANTHER" id="PTHR10937">
    <property type="entry name" value="GLUCOSAMINE--FRUCTOSE-6-PHOSPHATE AMINOTRANSFERASE, ISOMERIZING"/>
    <property type="match status" value="1"/>
</dbReference>
<dbReference type="PANTHER" id="PTHR10937:SF0">
    <property type="entry name" value="GLUTAMINE--FRUCTOSE-6-PHOSPHATE TRANSAMINASE (ISOMERIZING)"/>
    <property type="match status" value="1"/>
</dbReference>
<dbReference type="Pfam" id="PF13522">
    <property type="entry name" value="GATase_6"/>
    <property type="match status" value="1"/>
</dbReference>
<dbReference type="Pfam" id="PF01380">
    <property type="entry name" value="SIS"/>
    <property type="match status" value="2"/>
</dbReference>
<dbReference type="SUPFAM" id="SSF56235">
    <property type="entry name" value="N-terminal nucleophile aminohydrolases (Ntn hydrolases)"/>
    <property type="match status" value="1"/>
</dbReference>
<dbReference type="SUPFAM" id="SSF53697">
    <property type="entry name" value="SIS domain"/>
    <property type="match status" value="1"/>
</dbReference>
<dbReference type="PROSITE" id="PS51278">
    <property type="entry name" value="GATASE_TYPE_2"/>
    <property type="match status" value="1"/>
</dbReference>
<dbReference type="PROSITE" id="PS51464">
    <property type="entry name" value="SIS"/>
    <property type="match status" value="2"/>
</dbReference>
<name>GLMS_BACLD</name>
<reference key="1">
    <citation type="journal article" date="2004" name="J. Mol. Microbiol. Biotechnol.">
        <title>The complete genome sequence of Bacillus licheniformis DSM13, an organism with great industrial potential.</title>
        <authorList>
            <person name="Veith B."/>
            <person name="Herzberg C."/>
            <person name="Steckel S."/>
            <person name="Feesche J."/>
            <person name="Maurer K.H."/>
            <person name="Ehrenreich P."/>
            <person name="Baeumer S."/>
            <person name="Henne A."/>
            <person name="Liesegang H."/>
            <person name="Merkl R."/>
            <person name="Ehrenreich A."/>
            <person name="Gottschalk G."/>
        </authorList>
    </citation>
    <scope>NUCLEOTIDE SEQUENCE [LARGE SCALE GENOMIC DNA]</scope>
    <source>
        <strain>ATCC 14580 / DSM 13 / JCM 2505 / CCUG 7422 / NBRC 12200 / NCIMB 9375 / NCTC 10341 / NRRL NRS-1264 / Gibson 46</strain>
    </source>
</reference>
<reference key="2">
    <citation type="journal article" date="2004" name="Genome Biol.">
        <title>Complete genome sequence of the industrial bacterium Bacillus licheniformis and comparisons with closely related Bacillus species.</title>
        <authorList>
            <person name="Rey M.W."/>
            <person name="Ramaiya P."/>
            <person name="Nelson B.A."/>
            <person name="Brody-Karpin S.D."/>
            <person name="Zaretsky E.J."/>
            <person name="Tang M."/>
            <person name="Lopez de Leon A."/>
            <person name="Xiang H."/>
            <person name="Gusti V."/>
            <person name="Clausen I.G."/>
            <person name="Olsen P.B."/>
            <person name="Rasmussen M.D."/>
            <person name="Andersen J.T."/>
            <person name="Joergensen P.L."/>
            <person name="Larsen T.S."/>
            <person name="Sorokin A."/>
            <person name="Bolotin A."/>
            <person name="Lapidus A."/>
            <person name="Galleron N."/>
            <person name="Ehrlich S.D."/>
            <person name="Berka R.M."/>
        </authorList>
    </citation>
    <scope>NUCLEOTIDE SEQUENCE [LARGE SCALE GENOMIC DNA]</scope>
    <source>
        <strain>ATCC 14580 / DSM 13 / JCM 2505 / CCUG 7422 / NBRC 12200 / NCIMB 9375 / NCTC 10341 / NRRL NRS-1264 / Gibson 46</strain>
    </source>
</reference>
<protein>
    <recommendedName>
        <fullName evidence="1">Glutamine--fructose-6-phosphate aminotransferase [isomerizing]</fullName>
        <ecNumber evidence="1">2.6.1.16</ecNumber>
    </recommendedName>
    <alternativeName>
        <fullName evidence="1">D-fructose-6-phosphate amidotransferase</fullName>
    </alternativeName>
    <alternativeName>
        <fullName evidence="1">GFAT</fullName>
    </alternativeName>
    <alternativeName>
        <fullName evidence="1">Glucosamine-6-phosphate synthase</fullName>
    </alternativeName>
    <alternativeName>
        <fullName evidence="1">Hexosephosphate aminotransferase</fullName>
    </alternativeName>
    <alternativeName>
        <fullName evidence="1">L-glutamine--D-fructose-6-phosphate amidotransferase</fullName>
    </alternativeName>
</protein>
<organism>
    <name type="scientific">Bacillus licheniformis (strain ATCC 14580 / DSM 13 / JCM 2505 / CCUG 7422 / NBRC 12200 / NCIMB 9375 / NCTC 10341 / NRRL NRS-1264 / Gibson 46)</name>
    <dbReference type="NCBI Taxonomy" id="279010"/>
    <lineage>
        <taxon>Bacteria</taxon>
        <taxon>Bacillati</taxon>
        <taxon>Bacillota</taxon>
        <taxon>Bacilli</taxon>
        <taxon>Bacillales</taxon>
        <taxon>Bacillaceae</taxon>
        <taxon>Bacillus</taxon>
    </lineage>
</organism>
<accession>Q65P46</accession>
<accession>Q62ZI5</accession>
<comment type="function">
    <text evidence="1">Catalyzes the first step in hexosamine metabolism, converting fructose-6P into glucosamine-6P using glutamine as a nitrogen source.</text>
</comment>
<comment type="catalytic activity">
    <reaction evidence="1">
        <text>D-fructose 6-phosphate + L-glutamine = D-glucosamine 6-phosphate + L-glutamate</text>
        <dbReference type="Rhea" id="RHEA:13237"/>
        <dbReference type="ChEBI" id="CHEBI:29985"/>
        <dbReference type="ChEBI" id="CHEBI:58359"/>
        <dbReference type="ChEBI" id="CHEBI:58725"/>
        <dbReference type="ChEBI" id="CHEBI:61527"/>
        <dbReference type="EC" id="2.6.1.16"/>
    </reaction>
</comment>
<comment type="subunit">
    <text evidence="1">Homodimer.</text>
</comment>
<comment type="subcellular location">
    <subcellularLocation>
        <location evidence="1">Cytoplasm</location>
    </subcellularLocation>
</comment>
<proteinExistence type="inferred from homology"/>
<gene>
    <name evidence="1" type="primary">glmS</name>
    <name type="ordered locus">BLi00204</name>
    <name type="ordered locus">BL02704</name>
</gene>
<feature type="initiator methionine" description="Removed" evidence="1">
    <location>
        <position position="1"/>
    </location>
</feature>
<feature type="chain" id="PRO_0000135298" description="Glutamine--fructose-6-phosphate aminotransferase [isomerizing]">
    <location>
        <begin position="2"/>
        <end position="600"/>
    </location>
</feature>
<feature type="domain" description="Glutamine amidotransferase type-2" evidence="1">
    <location>
        <begin position="2"/>
        <end position="217"/>
    </location>
</feature>
<feature type="domain" description="SIS 1" evidence="1">
    <location>
        <begin position="283"/>
        <end position="422"/>
    </location>
</feature>
<feature type="domain" description="SIS 2" evidence="1">
    <location>
        <begin position="452"/>
        <end position="590"/>
    </location>
</feature>
<feature type="active site" description="Nucleophile; for GATase activity" evidence="1">
    <location>
        <position position="2"/>
    </location>
</feature>
<feature type="active site" description="For Fru-6P isomerization activity" evidence="1">
    <location>
        <position position="595"/>
    </location>
</feature>